<dbReference type="EMBL" id="AF037440">
    <property type="protein sequence ID" value="AAB92570.1"/>
    <property type="molecule type" value="Genomic_DNA"/>
</dbReference>
<dbReference type="EMBL" id="CP001600">
    <property type="protein sequence ID" value="ACR70501.1"/>
    <property type="molecule type" value="Genomic_DNA"/>
</dbReference>
<dbReference type="RefSeq" id="WP_015872574.1">
    <property type="nucleotide sequence ID" value="NZ_CP169062.1"/>
</dbReference>
<dbReference type="SMR" id="O52400"/>
<dbReference type="KEGG" id="eic:NT01EI_3364"/>
<dbReference type="PATRIC" id="fig|634503.3.peg.2990"/>
<dbReference type="HOGENOM" id="CLU_080344_3_0_6"/>
<dbReference type="OrthoDB" id="5985609at2"/>
<dbReference type="Proteomes" id="UP000001485">
    <property type="component" value="Chromosome"/>
</dbReference>
<dbReference type="GO" id="GO:0006974">
    <property type="term" value="P:DNA damage response"/>
    <property type="evidence" value="ECO:0007669"/>
    <property type="project" value="TreeGrafter"/>
</dbReference>
<dbReference type="Gene3D" id="3.30.110.170">
    <property type="entry name" value="Protein of unknown function (DUF541), domain 1"/>
    <property type="match status" value="1"/>
</dbReference>
<dbReference type="Gene3D" id="3.30.70.2970">
    <property type="entry name" value="Protein of unknown function (DUF541), domain 2"/>
    <property type="match status" value="1"/>
</dbReference>
<dbReference type="InterPro" id="IPR052022">
    <property type="entry name" value="26kDa_periplasmic_antigen"/>
</dbReference>
<dbReference type="InterPro" id="IPR007497">
    <property type="entry name" value="SIMPL/DUF541"/>
</dbReference>
<dbReference type="NCBIfam" id="NF008299">
    <property type="entry name" value="PRK11087.1"/>
    <property type="match status" value="1"/>
</dbReference>
<dbReference type="PANTHER" id="PTHR34387:SF1">
    <property type="entry name" value="PERIPLASMIC IMMUNOGENIC PROTEIN"/>
    <property type="match status" value="1"/>
</dbReference>
<dbReference type="PANTHER" id="PTHR34387">
    <property type="entry name" value="SLR1258 PROTEIN"/>
    <property type="match status" value="1"/>
</dbReference>
<dbReference type="Pfam" id="PF04402">
    <property type="entry name" value="SIMPL"/>
    <property type="match status" value="1"/>
</dbReference>
<name>YGGE_EDWI9</name>
<sequence length="239" mass="26006">MKLTVLALAAMMGVGGMAASVQAAEVPEGPHVVTSGTASVDAVPDMATLTFQVNASAKDAAVAKSQVDQRVAKYFDFLKRNGIDPQDISAANLYTMPEYEYQKDGKSQLKGYRAVRTVQVTLRQLDKLNSLLDGALKANLNEIRSVELGVAKPEVYRDKARQMAIRNAISQAESLAQGFGVTLGPVYSVRYHVSNFQPEPETRMYAAAPSANQTSAAQTYEQQTIHFDDRVEVVFNLSK</sequence>
<accession>O52400</accession>
<accession>C5BAU2</accession>
<gene>
    <name type="primary">yggE</name>
    <name type="ordered locus">NT01EI_3364</name>
</gene>
<protein>
    <recommendedName>
        <fullName>Uncharacterized protein YggE</fullName>
    </recommendedName>
</protein>
<feature type="chain" id="PRO_0000169367" description="Uncharacterized protein YggE">
    <location>
        <begin position="1"/>
        <end position="239"/>
    </location>
</feature>
<organism>
    <name type="scientific">Edwardsiella ictaluri (strain 93-146)</name>
    <dbReference type="NCBI Taxonomy" id="634503"/>
    <lineage>
        <taxon>Bacteria</taxon>
        <taxon>Pseudomonadati</taxon>
        <taxon>Pseudomonadota</taxon>
        <taxon>Gammaproteobacteria</taxon>
        <taxon>Enterobacterales</taxon>
        <taxon>Hafniaceae</taxon>
        <taxon>Edwardsiella</taxon>
    </lineage>
</organism>
<proteinExistence type="predicted"/>
<reference key="1">
    <citation type="journal article" date="2002" name="Dis. Aquat. Organ.">
        <title>Cloning and characterization of Edwardsiella ictaluri proteins expressed and recognized by the channel catfish Ictalurus punctatus immune response during infection.</title>
        <authorList>
            <person name="Moore M.M."/>
            <person name="Fernandez D.L."/>
            <person name="Thune R.L."/>
        </authorList>
    </citation>
    <scope>NUCLEOTIDE SEQUENCE [GENOMIC DNA]</scope>
</reference>
<reference key="2">
    <citation type="submission" date="2009-03" db="EMBL/GenBank/DDBJ databases">
        <title>Complete genome sequence of Edwardsiella ictaluri 93-146.</title>
        <authorList>
            <person name="Williams M.L."/>
            <person name="Gillaspy A.F."/>
            <person name="Dyer D.W."/>
            <person name="Thune R.L."/>
            <person name="Waldbieser G.C."/>
            <person name="Schuster S.C."/>
            <person name="Gipson J."/>
            <person name="Zaitshik J."/>
            <person name="Landry C."/>
            <person name="Lawrence M.L."/>
        </authorList>
    </citation>
    <scope>NUCLEOTIDE SEQUENCE [LARGE SCALE GENOMIC DNA]</scope>
    <source>
        <strain>93-146</strain>
    </source>
</reference>